<feature type="chain" id="PRO_0000108485" description="Transcriptional regulator MraZ">
    <location>
        <begin position="1"/>
        <end position="158"/>
    </location>
</feature>
<feature type="domain" description="SpoVT-AbrB 1" evidence="2">
    <location>
        <begin position="5"/>
        <end position="52"/>
    </location>
</feature>
<feature type="domain" description="SpoVT-AbrB 2" evidence="2">
    <location>
        <begin position="91"/>
        <end position="134"/>
    </location>
</feature>
<accession>Q748C9</accession>
<comment type="subunit">
    <text evidence="1">Forms oligomers.</text>
</comment>
<comment type="subcellular location">
    <subcellularLocation>
        <location evidence="1">Cytoplasm</location>
        <location evidence="1">Nucleoid</location>
    </subcellularLocation>
</comment>
<comment type="similarity">
    <text evidence="1">Belongs to the MraZ family.</text>
</comment>
<keyword id="KW-0963">Cytoplasm</keyword>
<keyword id="KW-0238">DNA-binding</keyword>
<keyword id="KW-1185">Reference proteome</keyword>
<keyword id="KW-0677">Repeat</keyword>
<keyword id="KW-0804">Transcription</keyword>
<keyword id="KW-0805">Transcription regulation</keyword>
<dbReference type="EMBL" id="AE017180">
    <property type="protein sequence ID" value="AAR36469.1"/>
    <property type="molecule type" value="Genomic_DNA"/>
</dbReference>
<dbReference type="RefSeq" id="NP_954119.1">
    <property type="nucleotide sequence ID" value="NC_002939.5"/>
</dbReference>
<dbReference type="RefSeq" id="WP_010943703.1">
    <property type="nucleotide sequence ID" value="NC_002939.5"/>
</dbReference>
<dbReference type="SMR" id="Q748C9"/>
<dbReference type="FunCoup" id="Q748C9">
    <property type="interactions" value="231"/>
</dbReference>
<dbReference type="STRING" id="243231.GSU3078"/>
<dbReference type="EnsemblBacteria" id="AAR36469">
    <property type="protein sequence ID" value="AAR36469"/>
    <property type="gene ID" value="GSU3078"/>
</dbReference>
<dbReference type="KEGG" id="gsu:GSU3078"/>
<dbReference type="PATRIC" id="fig|243231.5.peg.3102"/>
<dbReference type="eggNOG" id="COG2001">
    <property type="taxonomic scope" value="Bacteria"/>
</dbReference>
<dbReference type="HOGENOM" id="CLU_107907_0_5_7"/>
<dbReference type="InParanoid" id="Q748C9"/>
<dbReference type="OrthoDB" id="9807753at2"/>
<dbReference type="Proteomes" id="UP000000577">
    <property type="component" value="Chromosome"/>
</dbReference>
<dbReference type="GO" id="GO:0005737">
    <property type="term" value="C:cytoplasm"/>
    <property type="evidence" value="ECO:0007669"/>
    <property type="project" value="UniProtKB-UniRule"/>
</dbReference>
<dbReference type="GO" id="GO:0009295">
    <property type="term" value="C:nucleoid"/>
    <property type="evidence" value="ECO:0007669"/>
    <property type="project" value="UniProtKB-SubCell"/>
</dbReference>
<dbReference type="GO" id="GO:0003700">
    <property type="term" value="F:DNA-binding transcription factor activity"/>
    <property type="evidence" value="ECO:0000318"/>
    <property type="project" value="GO_Central"/>
</dbReference>
<dbReference type="GO" id="GO:0000976">
    <property type="term" value="F:transcription cis-regulatory region binding"/>
    <property type="evidence" value="ECO:0000318"/>
    <property type="project" value="GO_Central"/>
</dbReference>
<dbReference type="GO" id="GO:2000143">
    <property type="term" value="P:negative regulation of DNA-templated transcription initiation"/>
    <property type="evidence" value="ECO:0000318"/>
    <property type="project" value="GO_Central"/>
</dbReference>
<dbReference type="CDD" id="cd16321">
    <property type="entry name" value="MraZ_C"/>
    <property type="match status" value="1"/>
</dbReference>
<dbReference type="CDD" id="cd16320">
    <property type="entry name" value="MraZ_N"/>
    <property type="match status" value="1"/>
</dbReference>
<dbReference type="Gene3D" id="3.40.1550.20">
    <property type="entry name" value="Transcriptional regulator MraZ domain"/>
    <property type="match status" value="1"/>
</dbReference>
<dbReference type="HAMAP" id="MF_01008">
    <property type="entry name" value="MraZ"/>
    <property type="match status" value="1"/>
</dbReference>
<dbReference type="InterPro" id="IPR003444">
    <property type="entry name" value="MraZ"/>
</dbReference>
<dbReference type="InterPro" id="IPR035644">
    <property type="entry name" value="MraZ_C"/>
</dbReference>
<dbReference type="InterPro" id="IPR020603">
    <property type="entry name" value="MraZ_dom"/>
</dbReference>
<dbReference type="InterPro" id="IPR035642">
    <property type="entry name" value="MraZ_N"/>
</dbReference>
<dbReference type="InterPro" id="IPR038619">
    <property type="entry name" value="MraZ_sf"/>
</dbReference>
<dbReference type="InterPro" id="IPR007159">
    <property type="entry name" value="SpoVT-AbrB_dom"/>
</dbReference>
<dbReference type="InterPro" id="IPR037914">
    <property type="entry name" value="SpoVT-AbrB_sf"/>
</dbReference>
<dbReference type="NCBIfam" id="NF001482">
    <property type="entry name" value="PRK00326.3-4"/>
    <property type="match status" value="1"/>
</dbReference>
<dbReference type="PANTHER" id="PTHR34701">
    <property type="entry name" value="TRANSCRIPTIONAL REGULATOR MRAZ"/>
    <property type="match status" value="1"/>
</dbReference>
<dbReference type="PANTHER" id="PTHR34701:SF1">
    <property type="entry name" value="TRANSCRIPTIONAL REGULATOR MRAZ"/>
    <property type="match status" value="1"/>
</dbReference>
<dbReference type="Pfam" id="PF02381">
    <property type="entry name" value="MraZ"/>
    <property type="match status" value="2"/>
</dbReference>
<dbReference type="SUPFAM" id="SSF89447">
    <property type="entry name" value="AbrB/MazE/MraZ-like"/>
    <property type="match status" value="1"/>
</dbReference>
<dbReference type="PROSITE" id="PS51740">
    <property type="entry name" value="SPOVT_ABRB"/>
    <property type="match status" value="2"/>
</dbReference>
<name>MRAZ_GEOSL</name>
<sequence>MFRGIYETTIDAKGRTSLPAKFREVLVDVHGDDRFVITNSAPVDLGAGTFSSGLLIFPYAKWVEFEENFRSSKGLTSAQRNSIMRTIISPAVECCADKLGRLLIPPHLRKGAALERDILFVGVMDKIEVWSQAEREKVRIQDLKNFPSDSETVAELGL</sequence>
<evidence type="ECO:0000255" key="1">
    <source>
        <dbReference type="HAMAP-Rule" id="MF_01008"/>
    </source>
</evidence>
<evidence type="ECO:0000255" key="2">
    <source>
        <dbReference type="PROSITE-ProRule" id="PRU01076"/>
    </source>
</evidence>
<proteinExistence type="inferred from homology"/>
<protein>
    <recommendedName>
        <fullName>Transcriptional regulator MraZ</fullName>
    </recommendedName>
</protein>
<reference key="1">
    <citation type="journal article" date="2003" name="Science">
        <title>Genome of Geobacter sulfurreducens: metal reduction in subsurface environments.</title>
        <authorList>
            <person name="Methe B.A."/>
            <person name="Nelson K.E."/>
            <person name="Eisen J.A."/>
            <person name="Paulsen I.T."/>
            <person name="Nelson W.C."/>
            <person name="Heidelberg J.F."/>
            <person name="Wu D."/>
            <person name="Wu M."/>
            <person name="Ward N.L."/>
            <person name="Beanan M.J."/>
            <person name="Dodson R.J."/>
            <person name="Madupu R."/>
            <person name="Brinkac L.M."/>
            <person name="Daugherty S.C."/>
            <person name="DeBoy R.T."/>
            <person name="Durkin A.S."/>
            <person name="Gwinn M.L."/>
            <person name="Kolonay J.F."/>
            <person name="Sullivan S.A."/>
            <person name="Haft D.H."/>
            <person name="Selengut J."/>
            <person name="Davidsen T.M."/>
            <person name="Zafar N."/>
            <person name="White O."/>
            <person name="Tran B."/>
            <person name="Romero C."/>
            <person name="Forberger H.A."/>
            <person name="Weidman J.F."/>
            <person name="Khouri H.M."/>
            <person name="Feldblyum T.V."/>
            <person name="Utterback T.R."/>
            <person name="Van Aken S.E."/>
            <person name="Lovley D.R."/>
            <person name="Fraser C.M."/>
        </authorList>
    </citation>
    <scope>NUCLEOTIDE SEQUENCE [LARGE SCALE GENOMIC DNA]</scope>
    <source>
        <strain>ATCC 51573 / DSM 12127 / PCA</strain>
    </source>
</reference>
<gene>
    <name evidence="1" type="primary">mraZ</name>
    <name type="ordered locus">GSU3078</name>
</gene>
<organism>
    <name type="scientific">Geobacter sulfurreducens (strain ATCC 51573 / DSM 12127 / PCA)</name>
    <dbReference type="NCBI Taxonomy" id="243231"/>
    <lineage>
        <taxon>Bacteria</taxon>
        <taxon>Pseudomonadati</taxon>
        <taxon>Thermodesulfobacteriota</taxon>
        <taxon>Desulfuromonadia</taxon>
        <taxon>Geobacterales</taxon>
        <taxon>Geobacteraceae</taxon>
        <taxon>Geobacter</taxon>
    </lineage>
</organism>